<name>ATP6_TRIL1</name>
<keyword id="KW-0066">ATP synthesis</keyword>
<keyword id="KW-0997">Cell inner membrane</keyword>
<keyword id="KW-1003">Cell membrane</keyword>
<keyword id="KW-0138">CF(0)</keyword>
<keyword id="KW-0375">Hydrogen ion transport</keyword>
<keyword id="KW-0406">Ion transport</keyword>
<keyword id="KW-0472">Membrane</keyword>
<keyword id="KW-1185">Reference proteome</keyword>
<keyword id="KW-0812">Transmembrane</keyword>
<keyword id="KW-1133">Transmembrane helix</keyword>
<keyword id="KW-0813">Transport</keyword>
<protein>
    <recommendedName>
        <fullName evidence="1">ATP synthase subunit a</fullName>
    </recommendedName>
    <alternativeName>
        <fullName evidence="1">ATP synthase F0 sector subunit a</fullName>
    </alternativeName>
    <alternativeName>
        <fullName evidence="1">F-ATPase subunit 6</fullName>
    </alternativeName>
</protein>
<organism>
    <name type="scientific">Trichlorobacter lovleyi (strain ATCC BAA-1151 / DSM 17278 / SZ)</name>
    <name type="common">Geobacter lovleyi</name>
    <dbReference type="NCBI Taxonomy" id="398767"/>
    <lineage>
        <taxon>Bacteria</taxon>
        <taxon>Pseudomonadati</taxon>
        <taxon>Thermodesulfobacteriota</taxon>
        <taxon>Desulfuromonadia</taxon>
        <taxon>Geobacterales</taxon>
        <taxon>Geobacteraceae</taxon>
        <taxon>Trichlorobacter</taxon>
    </lineage>
</organism>
<feature type="chain" id="PRO_0000362311" description="ATP synthase subunit a">
    <location>
        <begin position="1"/>
        <end position="230"/>
    </location>
</feature>
<feature type="transmembrane region" description="Helical" evidence="1">
    <location>
        <begin position="26"/>
        <end position="46"/>
    </location>
</feature>
<feature type="transmembrane region" description="Helical" evidence="1">
    <location>
        <begin position="83"/>
        <end position="103"/>
    </location>
</feature>
<feature type="transmembrane region" description="Helical" evidence="1">
    <location>
        <begin position="112"/>
        <end position="132"/>
    </location>
</feature>
<feature type="transmembrane region" description="Helical" evidence="1">
    <location>
        <begin position="143"/>
        <end position="163"/>
    </location>
</feature>
<feature type="transmembrane region" description="Helical" evidence="1">
    <location>
        <begin position="182"/>
        <end position="202"/>
    </location>
</feature>
<feature type="transmembrane region" description="Helical" evidence="1">
    <location>
        <begin position="203"/>
        <end position="223"/>
    </location>
</feature>
<comment type="function">
    <text evidence="1">Key component of the proton channel; it plays a direct role in the translocation of protons across the membrane.</text>
</comment>
<comment type="subunit">
    <text evidence="1">F-type ATPases have 2 components, CF(1) - the catalytic core - and CF(0) - the membrane proton channel. CF(1) has five subunits: alpha(3), beta(3), gamma(1), delta(1), epsilon(1). CF(0) has three main subunits: a(1), b(2) and c(9-12). The alpha and beta chains form an alternating ring which encloses part of the gamma chain. CF(1) is attached to CF(0) by a central stalk formed by the gamma and epsilon chains, while a peripheral stalk is formed by the delta and b chains.</text>
</comment>
<comment type="subcellular location">
    <subcellularLocation>
        <location evidence="1">Cell inner membrane</location>
        <topology evidence="1">Multi-pass membrane protein</topology>
    </subcellularLocation>
</comment>
<comment type="similarity">
    <text evidence="1">Belongs to the ATPase A chain family.</text>
</comment>
<evidence type="ECO:0000255" key="1">
    <source>
        <dbReference type="HAMAP-Rule" id="MF_01393"/>
    </source>
</evidence>
<proteinExistence type="inferred from homology"/>
<gene>
    <name evidence="1" type="primary">atpB</name>
    <name type="ordered locus">Glov_3142</name>
</gene>
<reference key="1">
    <citation type="submission" date="2008-05" db="EMBL/GenBank/DDBJ databases">
        <title>Complete sequence of chromosome of Geobacter lovleyi SZ.</title>
        <authorList>
            <consortium name="US DOE Joint Genome Institute"/>
            <person name="Lucas S."/>
            <person name="Copeland A."/>
            <person name="Lapidus A."/>
            <person name="Glavina del Rio T."/>
            <person name="Dalin E."/>
            <person name="Tice H."/>
            <person name="Bruce D."/>
            <person name="Goodwin L."/>
            <person name="Pitluck S."/>
            <person name="Chertkov O."/>
            <person name="Meincke L."/>
            <person name="Brettin T."/>
            <person name="Detter J.C."/>
            <person name="Han C."/>
            <person name="Tapia R."/>
            <person name="Kuske C.R."/>
            <person name="Schmutz J."/>
            <person name="Larimer F."/>
            <person name="Land M."/>
            <person name="Hauser L."/>
            <person name="Kyrpides N."/>
            <person name="Mikhailova N."/>
            <person name="Sung Y."/>
            <person name="Fletcher K.E."/>
            <person name="Ritalahti K.M."/>
            <person name="Loeffler F.E."/>
            <person name="Richardson P."/>
        </authorList>
    </citation>
    <scope>NUCLEOTIDE SEQUENCE [LARGE SCALE GENOMIC DNA]</scope>
    <source>
        <strain>ATCC BAA-1151 / DSM 17278 / SZ</strain>
    </source>
</reference>
<accession>B3E9X3</accession>
<dbReference type="EMBL" id="CP001089">
    <property type="protein sequence ID" value="ACD96848.1"/>
    <property type="molecule type" value="Genomic_DNA"/>
</dbReference>
<dbReference type="RefSeq" id="WP_012471172.1">
    <property type="nucleotide sequence ID" value="NC_010814.1"/>
</dbReference>
<dbReference type="SMR" id="B3E9X3"/>
<dbReference type="STRING" id="398767.Glov_3142"/>
<dbReference type="KEGG" id="glo:Glov_3142"/>
<dbReference type="eggNOG" id="COG0356">
    <property type="taxonomic scope" value="Bacteria"/>
</dbReference>
<dbReference type="HOGENOM" id="CLU_041018_2_2_7"/>
<dbReference type="OrthoDB" id="9789241at2"/>
<dbReference type="Proteomes" id="UP000002420">
    <property type="component" value="Chromosome"/>
</dbReference>
<dbReference type="GO" id="GO:0005886">
    <property type="term" value="C:plasma membrane"/>
    <property type="evidence" value="ECO:0007669"/>
    <property type="project" value="UniProtKB-SubCell"/>
</dbReference>
<dbReference type="GO" id="GO:0045259">
    <property type="term" value="C:proton-transporting ATP synthase complex"/>
    <property type="evidence" value="ECO:0007669"/>
    <property type="project" value="UniProtKB-KW"/>
</dbReference>
<dbReference type="GO" id="GO:0046933">
    <property type="term" value="F:proton-transporting ATP synthase activity, rotational mechanism"/>
    <property type="evidence" value="ECO:0007669"/>
    <property type="project" value="UniProtKB-UniRule"/>
</dbReference>
<dbReference type="GO" id="GO:0042777">
    <property type="term" value="P:proton motive force-driven plasma membrane ATP synthesis"/>
    <property type="evidence" value="ECO:0007669"/>
    <property type="project" value="TreeGrafter"/>
</dbReference>
<dbReference type="CDD" id="cd00310">
    <property type="entry name" value="ATP-synt_Fo_a_6"/>
    <property type="match status" value="1"/>
</dbReference>
<dbReference type="FunFam" id="1.20.120.220:FF:000006">
    <property type="entry name" value="ATP synthase subunit a"/>
    <property type="match status" value="1"/>
</dbReference>
<dbReference type="Gene3D" id="1.20.120.220">
    <property type="entry name" value="ATP synthase, F0 complex, subunit A"/>
    <property type="match status" value="1"/>
</dbReference>
<dbReference type="HAMAP" id="MF_01393">
    <property type="entry name" value="ATP_synth_a_bact"/>
    <property type="match status" value="1"/>
</dbReference>
<dbReference type="InterPro" id="IPR045082">
    <property type="entry name" value="ATP_syn_F0_a_bact/chloroplast"/>
</dbReference>
<dbReference type="InterPro" id="IPR000568">
    <property type="entry name" value="ATP_synth_F0_asu"/>
</dbReference>
<dbReference type="InterPro" id="IPR023011">
    <property type="entry name" value="ATP_synth_F0_asu_AS"/>
</dbReference>
<dbReference type="InterPro" id="IPR035908">
    <property type="entry name" value="F0_ATP_A_sf"/>
</dbReference>
<dbReference type="NCBIfam" id="TIGR01131">
    <property type="entry name" value="ATP_synt_6_or_A"/>
    <property type="match status" value="1"/>
</dbReference>
<dbReference type="PANTHER" id="PTHR42823">
    <property type="entry name" value="ATP SYNTHASE SUBUNIT A, CHLOROPLASTIC"/>
    <property type="match status" value="1"/>
</dbReference>
<dbReference type="PANTHER" id="PTHR42823:SF3">
    <property type="entry name" value="ATP SYNTHASE SUBUNIT A, CHLOROPLASTIC"/>
    <property type="match status" value="1"/>
</dbReference>
<dbReference type="Pfam" id="PF00119">
    <property type="entry name" value="ATP-synt_A"/>
    <property type="match status" value="1"/>
</dbReference>
<dbReference type="PRINTS" id="PR00123">
    <property type="entry name" value="ATPASEA"/>
</dbReference>
<dbReference type="SUPFAM" id="SSF81336">
    <property type="entry name" value="F1F0 ATP synthase subunit A"/>
    <property type="match status" value="1"/>
</dbReference>
<dbReference type="PROSITE" id="PS00449">
    <property type="entry name" value="ATPASE_A"/>
    <property type="match status" value="1"/>
</dbReference>
<sequence>MVHPLLFLQFLSTKLQHLLHISDASANAVVYTWTVIVLLLVLSLIATRALKTIPSGVQNFMEVVVDGIENMIVETMGEHGRSFFPLIATLAIFILVSNLVGLIPGFYPPTANVNTTAACAIVVFLATHVVGIKHHGFHYLKHFMGPIWWLAPLMFFIEVIGHLSRPVSLTLRLFGNMNGHELVLMIFFALAPFLVPLPMMLMGVLVSFIQAFVFMLLAMIYIQGSLEEAH</sequence>